<sequence>MAGQTFLHRIGTDLVHIPRIEGMLERYGKQFLNRVYTEGEQHYCLASKPHRANRLAGRWAAKEAVTKALGTGWRGVGYRDIEVVRLASGEPTICLNGRAVLLVERFGRLDWQVSFSHDREYAVATVSVIGFF</sequence>
<name>ACPS_GLOVI</name>
<reference key="1">
    <citation type="journal article" date="2003" name="DNA Res.">
        <title>Complete genome structure of Gloeobacter violaceus PCC 7421, a cyanobacterium that lacks thylakoids.</title>
        <authorList>
            <person name="Nakamura Y."/>
            <person name="Kaneko T."/>
            <person name="Sato S."/>
            <person name="Mimuro M."/>
            <person name="Miyashita H."/>
            <person name="Tsuchiya T."/>
            <person name="Sasamoto S."/>
            <person name="Watanabe A."/>
            <person name="Kawashima K."/>
            <person name="Kishida Y."/>
            <person name="Kiyokawa C."/>
            <person name="Kohara M."/>
            <person name="Matsumoto M."/>
            <person name="Matsuno A."/>
            <person name="Nakazaki N."/>
            <person name="Shimpo S."/>
            <person name="Takeuchi C."/>
            <person name="Yamada M."/>
            <person name="Tabata S."/>
        </authorList>
    </citation>
    <scope>NUCLEOTIDE SEQUENCE [LARGE SCALE GENOMIC DNA]</scope>
    <source>
        <strain>ATCC 29082 / PCC 7421</strain>
    </source>
</reference>
<gene>
    <name evidence="1" type="primary">acpS</name>
    <name type="ordered locus">glr4008</name>
</gene>
<organism>
    <name type="scientific">Gloeobacter violaceus (strain ATCC 29082 / PCC 7421)</name>
    <dbReference type="NCBI Taxonomy" id="251221"/>
    <lineage>
        <taxon>Bacteria</taxon>
        <taxon>Bacillati</taxon>
        <taxon>Cyanobacteriota</taxon>
        <taxon>Cyanophyceae</taxon>
        <taxon>Gloeobacterales</taxon>
        <taxon>Gloeobacteraceae</taxon>
        <taxon>Gloeobacter</taxon>
    </lineage>
</organism>
<evidence type="ECO:0000255" key="1">
    <source>
        <dbReference type="HAMAP-Rule" id="MF_00101"/>
    </source>
</evidence>
<feature type="chain" id="PRO_0000175652" description="Holo-[acyl-carrier-protein] synthase">
    <location>
        <begin position="1"/>
        <end position="132"/>
    </location>
</feature>
<feature type="binding site" evidence="1">
    <location>
        <position position="13"/>
    </location>
    <ligand>
        <name>Mg(2+)</name>
        <dbReference type="ChEBI" id="CHEBI:18420"/>
    </ligand>
</feature>
<feature type="binding site" evidence="1">
    <location>
        <position position="63"/>
    </location>
    <ligand>
        <name>Mg(2+)</name>
        <dbReference type="ChEBI" id="CHEBI:18420"/>
    </ligand>
</feature>
<protein>
    <recommendedName>
        <fullName evidence="1">Holo-[acyl-carrier-protein] synthase</fullName>
        <shortName evidence="1">Holo-ACP synthase</shortName>
        <ecNumber evidence="1">2.7.8.7</ecNumber>
    </recommendedName>
    <alternativeName>
        <fullName evidence="1">4'-phosphopantetheinyl transferase AcpS</fullName>
    </alternativeName>
</protein>
<keyword id="KW-0963">Cytoplasm</keyword>
<keyword id="KW-0275">Fatty acid biosynthesis</keyword>
<keyword id="KW-0276">Fatty acid metabolism</keyword>
<keyword id="KW-0444">Lipid biosynthesis</keyword>
<keyword id="KW-0443">Lipid metabolism</keyword>
<keyword id="KW-0460">Magnesium</keyword>
<keyword id="KW-0479">Metal-binding</keyword>
<keyword id="KW-1185">Reference proteome</keyword>
<keyword id="KW-0808">Transferase</keyword>
<proteinExistence type="inferred from homology"/>
<accession>Q7NE72</accession>
<comment type="function">
    <text evidence="1">Transfers the 4'-phosphopantetheine moiety from coenzyme A to a Ser of acyl-carrier-protein.</text>
</comment>
<comment type="catalytic activity">
    <reaction evidence="1">
        <text>apo-[ACP] + CoA = holo-[ACP] + adenosine 3',5'-bisphosphate + H(+)</text>
        <dbReference type="Rhea" id="RHEA:12068"/>
        <dbReference type="Rhea" id="RHEA-COMP:9685"/>
        <dbReference type="Rhea" id="RHEA-COMP:9690"/>
        <dbReference type="ChEBI" id="CHEBI:15378"/>
        <dbReference type="ChEBI" id="CHEBI:29999"/>
        <dbReference type="ChEBI" id="CHEBI:57287"/>
        <dbReference type="ChEBI" id="CHEBI:58343"/>
        <dbReference type="ChEBI" id="CHEBI:64479"/>
        <dbReference type="EC" id="2.7.8.7"/>
    </reaction>
</comment>
<comment type="cofactor">
    <cofactor evidence="1">
        <name>Mg(2+)</name>
        <dbReference type="ChEBI" id="CHEBI:18420"/>
    </cofactor>
</comment>
<comment type="subcellular location">
    <subcellularLocation>
        <location evidence="1">Cytoplasm</location>
    </subcellularLocation>
</comment>
<comment type="similarity">
    <text evidence="1">Belongs to the P-Pant transferase superfamily. AcpS family.</text>
</comment>
<dbReference type="EC" id="2.7.8.7" evidence="1"/>
<dbReference type="EMBL" id="BA000045">
    <property type="protein sequence ID" value="BAC91949.1"/>
    <property type="molecule type" value="Genomic_DNA"/>
</dbReference>
<dbReference type="RefSeq" id="NP_926954.1">
    <property type="nucleotide sequence ID" value="NC_005125.1"/>
</dbReference>
<dbReference type="SMR" id="Q7NE72"/>
<dbReference type="STRING" id="251221.gene:10761526"/>
<dbReference type="EnsemblBacteria" id="BAC91949">
    <property type="protein sequence ID" value="BAC91949"/>
    <property type="gene ID" value="BAC91949"/>
</dbReference>
<dbReference type="KEGG" id="gvi:glr4008"/>
<dbReference type="PATRIC" id="fig|251221.4.peg.4040"/>
<dbReference type="eggNOG" id="COG0736">
    <property type="taxonomic scope" value="Bacteria"/>
</dbReference>
<dbReference type="HOGENOM" id="CLU_089696_3_1_3"/>
<dbReference type="InParanoid" id="Q7NE72"/>
<dbReference type="OrthoDB" id="517356at2"/>
<dbReference type="PhylomeDB" id="Q7NE72"/>
<dbReference type="Proteomes" id="UP000000557">
    <property type="component" value="Chromosome"/>
</dbReference>
<dbReference type="GO" id="GO:0005737">
    <property type="term" value="C:cytoplasm"/>
    <property type="evidence" value="ECO:0007669"/>
    <property type="project" value="UniProtKB-SubCell"/>
</dbReference>
<dbReference type="GO" id="GO:0008897">
    <property type="term" value="F:holo-[acyl-carrier-protein] synthase activity"/>
    <property type="evidence" value="ECO:0007669"/>
    <property type="project" value="UniProtKB-UniRule"/>
</dbReference>
<dbReference type="GO" id="GO:0000287">
    <property type="term" value="F:magnesium ion binding"/>
    <property type="evidence" value="ECO:0007669"/>
    <property type="project" value="UniProtKB-UniRule"/>
</dbReference>
<dbReference type="GO" id="GO:0006633">
    <property type="term" value="P:fatty acid biosynthetic process"/>
    <property type="evidence" value="ECO:0007669"/>
    <property type="project" value="UniProtKB-UniRule"/>
</dbReference>
<dbReference type="Gene3D" id="3.90.470.20">
    <property type="entry name" value="4'-phosphopantetheinyl transferase domain"/>
    <property type="match status" value="1"/>
</dbReference>
<dbReference type="HAMAP" id="MF_00101">
    <property type="entry name" value="AcpS"/>
    <property type="match status" value="1"/>
</dbReference>
<dbReference type="InterPro" id="IPR008278">
    <property type="entry name" value="4-PPantetheinyl_Trfase_dom"/>
</dbReference>
<dbReference type="InterPro" id="IPR037143">
    <property type="entry name" value="4-PPantetheinyl_Trfase_dom_sf"/>
</dbReference>
<dbReference type="InterPro" id="IPR002582">
    <property type="entry name" value="ACPS"/>
</dbReference>
<dbReference type="InterPro" id="IPR004568">
    <property type="entry name" value="Ppantetheine-prot_Trfase_dom"/>
</dbReference>
<dbReference type="NCBIfam" id="TIGR00516">
    <property type="entry name" value="acpS"/>
    <property type="match status" value="1"/>
</dbReference>
<dbReference type="NCBIfam" id="TIGR00556">
    <property type="entry name" value="pantethn_trn"/>
    <property type="match status" value="1"/>
</dbReference>
<dbReference type="Pfam" id="PF01648">
    <property type="entry name" value="ACPS"/>
    <property type="match status" value="1"/>
</dbReference>
<dbReference type="SUPFAM" id="SSF56214">
    <property type="entry name" value="4'-phosphopantetheinyl transferase"/>
    <property type="match status" value="1"/>
</dbReference>